<protein>
    <recommendedName>
        <fullName>Cytochrome b6-f complex iron-sulfur subunit, chloroplastic</fullName>
        <ecNumber>7.1.1.6</ecNumber>
    </recommendedName>
    <alternativeName>
        <fullName>Plastohydroquinone:plastocyanin oxidoreductase iron-sulfur protein</fullName>
    </alternativeName>
    <alternativeName>
        <fullName>Rieske iron-sulfur protein</fullName>
        <shortName>ISP</shortName>
        <shortName>RISP</shortName>
    </alternativeName>
</protein>
<reference key="1">
    <citation type="journal article" date="1999" name="Curr. Genet.">
        <title>Volvox germline-specific genes that are putative targets of RegA repression encode chloroplast proteins.</title>
        <authorList>
            <person name="Meissner M."/>
            <person name="Stark K."/>
            <person name="Cresnar B."/>
            <person name="Kirk D.L."/>
            <person name="Schmitt R."/>
        </authorList>
    </citation>
    <scope>NUCLEOTIDE SEQUENCE [MRNA]</scope>
    <source>
        <strain>f. Nagariensis</strain>
    </source>
</reference>
<name>UCRIA_VOLCA</name>
<organism>
    <name type="scientific">Volvox carteri</name>
    <name type="common">Green alga</name>
    <dbReference type="NCBI Taxonomy" id="3067"/>
    <lineage>
        <taxon>Eukaryota</taxon>
        <taxon>Viridiplantae</taxon>
        <taxon>Chlorophyta</taxon>
        <taxon>core chlorophytes</taxon>
        <taxon>Chlorophyceae</taxon>
        <taxon>CS clade</taxon>
        <taxon>Chlamydomonadales</taxon>
        <taxon>Volvocaceae</taxon>
        <taxon>Volvox</taxon>
    </lineage>
</organism>
<gene>
    <name type="primary">petC</name>
</gene>
<proteinExistence type="evidence at transcript level"/>
<feature type="transit peptide" description="Chloroplast" evidence="1">
    <location>
        <begin position="1"/>
        <end position="29"/>
    </location>
</feature>
<feature type="chain" id="PRO_0000030696" description="Cytochrome b6-f complex iron-sulfur subunit, chloroplastic">
    <location>
        <begin position="30"/>
        <end position="206"/>
    </location>
</feature>
<feature type="transmembrane region" description="Helical" evidence="2">
    <location>
        <begin position="48"/>
        <end position="68"/>
    </location>
</feature>
<feature type="domain" description="Rieske" evidence="3">
    <location>
        <begin position="92"/>
        <end position="188"/>
    </location>
</feature>
<feature type="binding site" evidence="3">
    <location>
        <position position="134"/>
    </location>
    <ligand>
        <name>[2Fe-2S] cluster</name>
        <dbReference type="ChEBI" id="CHEBI:190135"/>
    </ligand>
</feature>
<feature type="binding site" evidence="3">
    <location>
        <position position="136"/>
    </location>
    <ligand>
        <name>[2Fe-2S] cluster</name>
        <dbReference type="ChEBI" id="CHEBI:190135"/>
    </ligand>
</feature>
<feature type="binding site" evidence="3">
    <location>
        <position position="152"/>
    </location>
    <ligand>
        <name>[2Fe-2S] cluster</name>
        <dbReference type="ChEBI" id="CHEBI:190135"/>
    </ligand>
</feature>
<feature type="binding site" evidence="3">
    <location>
        <position position="155"/>
    </location>
    <ligand>
        <name>[2Fe-2S] cluster</name>
        <dbReference type="ChEBI" id="CHEBI:190135"/>
    </ligand>
</feature>
<feature type="disulfide bond" evidence="3">
    <location>
        <begin position="139"/>
        <end position="154"/>
    </location>
</feature>
<comment type="function">
    <text evidence="1">Component of the cytochrome b6-f complex, which mediates electron transfer between photosystem II (PSII) and photosystem I (PSI), cyclic electron flow around PSI, and state transitions.</text>
</comment>
<comment type="catalytic activity">
    <reaction>
        <text>2 oxidized [plastocyanin] + a plastoquinol + 2 H(+)(in) = 2 reduced [plastocyanin] + a plastoquinone + 4 H(+)(out)</text>
        <dbReference type="Rhea" id="RHEA:22148"/>
        <dbReference type="Rhea" id="RHEA-COMP:9561"/>
        <dbReference type="Rhea" id="RHEA-COMP:9562"/>
        <dbReference type="Rhea" id="RHEA-COMP:10039"/>
        <dbReference type="Rhea" id="RHEA-COMP:10040"/>
        <dbReference type="ChEBI" id="CHEBI:15378"/>
        <dbReference type="ChEBI" id="CHEBI:17757"/>
        <dbReference type="ChEBI" id="CHEBI:29036"/>
        <dbReference type="ChEBI" id="CHEBI:49552"/>
        <dbReference type="ChEBI" id="CHEBI:62192"/>
        <dbReference type="EC" id="7.1.1.6"/>
    </reaction>
</comment>
<comment type="cofactor">
    <cofactor evidence="3">
        <name>[2Fe-2S] cluster</name>
        <dbReference type="ChEBI" id="CHEBI:190135"/>
    </cofactor>
    <text evidence="3">Binds 1 [2Fe-2S] cluster per subunit.</text>
</comment>
<comment type="subunit">
    <text evidence="1">The 4 large subunits of the cytochrome b6-f complex are cytochrome b6, subunit IV (17 kDa polypeptide, petD), cytochrome f and the Rieske protein, while the 4 small subunits are petG, petL, petM and petN. The complex functions as a dimer (By similarity).</text>
</comment>
<comment type="subcellular location">
    <subcellularLocation>
        <location evidence="1">Plastid</location>
        <location evidence="1">Chloroplast thylakoid membrane</location>
        <topology evidence="1">Single-pass membrane protein</topology>
    </subcellularLocation>
    <text evidence="1">The transmembrane helix obliquely spans the membrane in one monomer, and its extrinsic C-terminal domain is part of the other monomer.</text>
</comment>
<comment type="miscellaneous">
    <text>This protein is 1 of 2 subunits of the cytochrome b6-f complex that are encoded in the nucleus.</text>
</comment>
<comment type="miscellaneous">
    <text>The Rieske iron-sulfur protein is a high potential 2Fe-2S protein.</text>
</comment>
<comment type="similarity">
    <text evidence="4">Belongs to the Rieske iron-sulfur protein family.</text>
</comment>
<evidence type="ECO:0000250" key="1"/>
<evidence type="ECO:0000255" key="2"/>
<evidence type="ECO:0000255" key="3">
    <source>
        <dbReference type="PROSITE-ProRule" id="PRU00628"/>
    </source>
</evidence>
<evidence type="ECO:0000305" key="4"/>
<sequence>MAMITSRRAAAPCKAQATRRSRVMSVVRAAAVSSEVPDMNKRNIMNLILLGGASLPVGSLALGYGAFFVPPSSGGGSGGQAAKDALGNDIKANAWLATHQKGDRSLSQGLKGDPTYLIVTADGTIEKYGLNAVCTHLGCVVPWVAAENKFKCPCHGSQYNAEGKVVRGPAPLSLALAHCDVQEDGLVTFSTWSETDFRTGLEPWWA</sequence>
<keyword id="KW-0001">2Fe-2S</keyword>
<keyword id="KW-0150">Chloroplast</keyword>
<keyword id="KW-1015">Disulfide bond</keyword>
<keyword id="KW-0249">Electron transport</keyword>
<keyword id="KW-0408">Iron</keyword>
<keyword id="KW-0411">Iron-sulfur</keyword>
<keyword id="KW-0472">Membrane</keyword>
<keyword id="KW-0479">Metal-binding</keyword>
<keyword id="KW-0934">Plastid</keyword>
<keyword id="KW-0793">Thylakoid</keyword>
<keyword id="KW-0809">Transit peptide</keyword>
<keyword id="KW-1278">Translocase</keyword>
<keyword id="KW-0812">Transmembrane</keyword>
<keyword id="KW-1133">Transmembrane helix</keyword>
<keyword id="KW-0813">Transport</keyword>
<dbReference type="EC" id="7.1.1.6"/>
<dbReference type="EMBL" id="AF110783">
    <property type="protein sequence ID" value="AAD55565.1"/>
    <property type="molecule type" value="mRNA"/>
</dbReference>
<dbReference type="SMR" id="Q9SBN3"/>
<dbReference type="KEGG" id="vcn:VOLCADRAFT_109628"/>
<dbReference type="OMA" id="FTPWTET"/>
<dbReference type="GO" id="GO:0009535">
    <property type="term" value="C:chloroplast thylakoid membrane"/>
    <property type="evidence" value="ECO:0007669"/>
    <property type="project" value="UniProtKB-SubCell"/>
</dbReference>
<dbReference type="GO" id="GO:0051537">
    <property type="term" value="F:2 iron, 2 sulfur cluster binding"/>
    <property type="evidence" value="ECO:0007669"/>
    <property type="project" value="UniProtKB-KW"/>
</dbReference>
<dbReference type="GO" id="GO:0046872">
    <property type="term" value="F:metal ion binding"/>
    <property type="evidence" value="ECO:0007669"/>
    <property type="project" value="UniProtKB-KW"/>
</dbReference>
<dbReference type="GO" id="GO:0009496">
    <property type="term" value="F:plastoquinol--plastocyanin reductase activity"/>
    <property type="evidence" value="ECO:0007669"/>
    <property type="project" value="UniProtKB-EC"/>
</dbReference>
<dbReference type="CDD" id="cd03471">
    <property type="entry name" value="Rieske_cytochrome_b6f"/>
    <property type="match status" value="1"/>
</dbReference>
<dbReference type="FunFam" id="2.102.10.10:FF:000007">
    <property type="entry name" value="Cytochrome b6-f complex iron-sulfur subunit"/>
    <property type="match status" value="1"/>
</dbReference>
<dbReference type="Gene3D" id="2.102.10.10">
    <property type="entry name" value="Rieske [2Fe-2S] iron-sulphur domain"/>
    <property type="match status" value="1"/>
</dbReference>
<dbReference type="Gene3D" id="1.20.5.700">
    <property type="entry name" value="Single helix bin"/>
    <property type="match status" value="1"/>
</dbReference>
<dbReference type="InterPro" id="IPR017941">
    <property type="entry name" value="Rieske_2Fe-2S"/>
</dbReference>
<dbReference type="InterPro" id="IPR036922">
    <property type="entry name" value="Rieske_2Fe-2S_sf"/>
</dbReference>
<dbReference type="InterPro" id="IPR014349">
    <property type="entry name" value="Rieske_Fe-S_prot"/>
</dbReference>
<dbReference type="InterPro" id="IPR005805">
    <property type="entry name" value="Rieske_Fe-S_prot_C"/>
</dbReference>
<dbReference type="NCBIfam" id="NF045928">
    <property type="entry name" value="Cytb6fFeSPetC"/>
    <property type="match status" value="1"/>
</dbReference>
<dbReference type="NCBIfam" id="NF010001">
    <property type="entry name" value="PRK13474.1"/>
    <property type="match status" value="1"/>
</dbReference>
<dbReference type="PANTHER" id="PTHR10134">
    <property type="entry name" value="CYTOCHROME B-C1 COMPLEX SUBUNIT RIESKE, MITOCHONDRIAL"/>
    <property type="match status" value="1"/>
</dbReference>
<dbReference type="Pfam" id="PF00355">
    <property type="entry name" value="Rieske"/>
    <property type="match status" value="1"/>
</dbReference>
<dbReference type="Pfam" id="PF25471">
    <property type="entry name" value="TM_PetC"/>
    <property type="match status" value="1"/>
</dbReference>
<dbReference type="PRINTS" id="PR00162">
    <property type="entry name" value="RIESKE"/>
</dbReference>
<dbReference type="SUPFAM" id="SSF50022">
    <property type="entry name" value="ISP domain"/>
    <property type="match status" value="1"/>
</dbReference>
<dbReference type="PROSITE" id="PS51296">
    <property type="entry name" value="RIESKE"/>
    <property type="match status" value="1"/>
</dbReference>
<accession>Q9SBN3</accession>